<feature type="chain" id="PRO_0000411425" description="Transcriptional repressor NrdR">
    <location>
        <begin position="1"/>
        <end position="164"/>
    </location>
</feature>
<feature type="domain" description="ATP-cone" evidence="1">
    <location>
        <begin position="49"/>
        <end position="139"/>
    </location>
</feature>
<feature type="zinc finger region" evidence="1">
    <location>
        <begin position="3"/>
        <end position="34"/>
    </location>
</feature>
<gene>
    <name evidence="1" type="primary">nrdR</name>
    <name type="ordered locus">SPs1613</name>
</gene>
<proteinExistence type="inferred from homology"/>
<keyword id="KW-0067">ATP-binding</keyword>
<keyword id="KW-0238">DNA-binding</keyword>
<keyword id="KW-0479">Metal-binding</keyword>
<keyword id="KW-0547">Nucleotide-binding</keyword>
<keyword id="KW-0678">Repressor</keyword>
<keyword id="KW-0804">Transcription</keyword>
<keyword id="KW-0805">Transcription regulation</keyword>
<keyword id="KW-0862">Zinc</keyword>
<keyword id="KW-0863">Zinc-finger</keyword>
<organism>
    <name type="scientific">Streptococcus pyogenes serotype M3 (strain SSI-1)</name>
    <dbReference type="NCBI Taxonomy" id="193567"/>
    <lineage>
        <taxon>Bacteria</taxon>
        <taxon>Bacillati</taxon>
        <taxon>Bacillota</taxon>
        <taxon>Bacilli</taxon>
        <taxon>Lactobacillales</taxon>
        <taxon>Streptococcaceae</taxon>
        <taxon>Streptococcus</taxon>
    </lineage>
</organism>
<reference key="1">
    <citation type="journal article" date="2003" name="Genome Res.">
        <title>Genome sequence of an M3 strain of Streptococcus pyogenes reveals a large-scale genomic rearrangement in invasive strains and new insights into phage evolution.</title>
        <authorList>
            <person name="Nakagawa I."/>
            <person name="Kurokawa K."/>
            <person name="Yamashita A."/>
            <person name="Nakata M."/>
            <person name="Tomiyasu Y."/>
            <person name="Okahashi N."/>
            <person name="Kawabata S."/>
            <person name="Yamazaki K."/>
            <person name="Shiba T."/>
            <person name="Yasunaga T."/>
            <person name="Hayashi H."/>
            <person name="Hattori M."/>
            <person name="Hamada S."/>
        </authorList>
    </citation>
    <scope>NUCLEOTIDE SEQUENCE [LARGE SCALE GENOMIC DNA]</scope>
    <source>
        <strain>SSI-1</strain>
    </source>
</reference>
<dbReference type="EMBL" id="BA000034">
    <property type="protein sequence ID" value="BAC64708.1"/>
    <property type="status" value="ALT_INIT"/>
    <property type="molecule type" value="Genomic_DNA"/>
</dbReference>
<dbReference type="RefSeq" id="WP_002985941.1">
    <property type="nucleotide sequence ID" value="NC_004606.1"/>
</dbReference>
<dbReference type="SMR" id="P0DC75"/>
<dbReference type="GeneID" id="69901381"/>
<dbReference type="KEGG" id="sps:SPs1613"/>
<dbReference type="HOGENOM" id="CLU_3158304_0_0_9"/>
<dbReference type="GO" id="GO:0005524">
    <property type="term" value="F:ATP binding"/>
    <property type="evidence" value="ECO:0007669"/>
    <property type="project" value="UniProtKB-KW"/>
</dbReference>
<dbReference type="GO" id="GO:0003677">
    <property type="term" value="F:DNA binding"/>
    <property type="evidence" value="ECO:0007669"/>
    <property type="project" value="UniProtKB-KW"/>
</dbReference>
<dbReference type="GO" id="GO:0008270">
    <property type="term" value="F:zinc ion binding"/>
    <property type="evidence" value="ECO:0007669"/>
    <property type="project" value="UniProtKB-UniRule"/>
</dbReference>
<dbReference type="GO" id="GO:0045892">
    <property type="term" value="P:negative regulation of DNA-templated transcription"/>
    <property type="evidence" value="ECO:0007669"/>
    <property type="project" value="UniProtKB-UniRule"/>
</dbReference>
<dbReference type="HAMAP" id="MF_00440">
    <property type="entry name" value="NrdR"/>
    <property type="match status" value="1"/>
</dbReference>
<dbReference type="InterPro" id="IPR005144">
    <property type="entry name" value="ATP-cone_dom"/>
</dbReference>
<dbReference type="InterPro" id="IPR055173">
    <property type="entry name" value="NrdR-like_N"/>
</dbReference>
<dbReference type="InterPro" id="IPR003796">
    <property type="entry name" value="RNR_NrdR-like"/>
</dbReference>
<dbReference type="NCBIfam" id="TIGR00244">
    <property type="entry name" value="transcriptional regulator NrdR"/>
    <property type="match status" value="1"/>
</dbReference>
<dbReference type="PANTHER" id="PTHR30455">
    <property type="entry name" value="TRANSCRIPTIONAL REPRESSOR NRDR"/>
    <property type="match status" value="1"/>
</dbReference>
<dbReference type="PANTHER" id="PTHR30455:SF2">
    <property type="entry name" value="TRANSCRIPTIONAL REPRESSOR NRDR"/>
    <property type="match status" value="1"/>
</dbReference>
<dbReference type="Pfam" id="PF03477">
    <property type="entry name" value="ATP-cone"/>
    <property type="match status" value="1"/>
</dbReference>
<dbReference type="Pfam" id="PF22811">
    <property type="entry name" value="Zn_ribbon_NrdR"/>
    <property type="match status" value="1"/>
</dbReference>
<dbReference type="PROSITE" id="PS51161">
    <property type="entry name" value="ATP_CONE"/>
    <property type="match status" value="1"/>
</dbReference>
<sequence length="164" mass="19131">MRCPKCNYHKSSVVDSRQAEDGNTIRRRRECEQCHTRFTTFERVEELPLLVIKKDGTREQFSRDKILNGVVQSAQKRPVSSTDIENVISRIEQEVRTTYENEVSSTAIGNLVMDELAELDEITYVRFASVYKSFKDVDEIEELLQQITNRVRGKKKRLNNDETN</sequence>
<accession>P0DC75</accession>
<accession>P67321</accession>
<accession>Q9A1D3</accession>
<comment type="function">
    <text evidence="1">Negatively regulates transcription of bacterial ribonucleotide reductase nrd genes and operons by binding to NrdR-boxes.</text>
</comment>
<comment type="cofactor">
    <cofactor evidence="1">
        <name>Zn(2+)</name>
        <dbReference type="ChEBI" id="CHEBI:29105"/>
    </cofactor>
    <text evidence="1">Binds 1 zinc ion.</text>
</comment>
<comment type="similarity">
    <text evidence="1">Belongs to the NrdR family.</text>
</comment>
<comment type="sequence caution" evidence="2">
    <conflict type="erroneous initiation">
        <sequence resource="EMBL-CDS" id="BAC64708"/>
    </conflict>
</comment>
<protein>
    <recommendedName>
        <fullName evidence="1">Transcriptional repressor NrdR</fullName>
    </recommendedName>
</protein>
<name>NRDR_STRPQ</name>
<evidence type="ECO:0000255" key="1">
    <source>
        <dbReference type="HAMAP-Rule" id="MF_00440"/>
    </source>
</evidence>
<evidence type="ECO:0000305" key="2"/>